<protein>
    <recommendedName>
        <fullName evidence="1">Small ribosomal subunit protein eS8</fullName>
    </recommendedName>
    <alternativeName>
        <fullName evidence="3">30S ribosomal protein S8e</fullName>
    </alternativeName>
</protein>
<sequence length="133" mass="14490">MGFYQGPDNRKITGGLKGKHRDKRKYEIGNPSTLTTLSAEDIRTKDRTLGGNFKVRLKYTTTANVLDPATNTAKKVKILEVLETPANKELARRGIIIRGAKIRTEAGLAVVTSRPGQDGVINAVLLKNESQGS</sequence>
<proteinExistence type="inferred from homology"/>
<reference key="1">
    <citation type="journal article" date="2009" name="Proc. Natl. Acad. Sci. U.S.A.">
        <title>Biogeography of the Sulfolobus islandicus pan-genome.</title>
        <authorList>
            <person name="Reno M.L."/>
            <person name="Held N.L."/>
            <person name="Fields C.J."/>
            <person name="Burke P.V."/>
            <person name="Whitaker R.J."/>
        </authorList>
    </citation>
    <scope>NUCLEOTIDE SEQUENCE [LARGE SCALE GENOMIC DNA]</scope>
    <source>
        <strain>M.14.25 / Kamchatka #1</strain>
    </source>
</reference>
<keyword id="KW-0687">Ribonucleoprotein</keyword>
<keyword id="KW-0689">Ribosomal protein</keyword>
<name>RS8E_SACI4</name>
<accession>C3MYT4</accession>
<dbReference type="EMBL" id="CP001400">
    <property type="protein sequence ID" value="ACP38718.1"/>
    <property type="molecule type" value="Genomic_DNA"/>
</dbReference>
<dbReference type="RefSeq" id="WP_012711944.1">
    <property type="nucleotide sequence ID" value="NC_012588.1"/>
</dbReference>
<dbReference type="SMR" id="C3MYT4"/>
<dbReference type="GeneID" id="7795925"/>
<dbReference type="KEGG" id="sia:M1425_1976"/>
<dbReference type="HOGENOM" id="CLU_080597_2_1_2"/>
<dbReference type="Proteomes" id="UP000001350">
    <property type="component" value="Chromosome"/>
</dbReference>
<dbReference type="GO" id="GO:1990904">
    <property type="term" value="C:ribonucleoprotein complex"/>
    <property type="evidence" value="ECO:0007669"/>
    <property type="project" value="UniProtKB-KW"/>
</dbReference>
<dbReference type="GO" id="GO:0005840">
    <property type="term" value="C:ribosome"/>
    <property type="evidence" value="ECO:0007669"/>
    <property type="project" value="UniProtKB-KW"/>
</dbReference>
<dbReference type="GO" id="GO:0003735">
    <property type="term" value="F:structural constituent of ribosome"/>
    <property type="evidence" value="ECO:0007669"/>
    <property type="project" value="InterPro"/>
</dbReference>
<dbReference type="GO" id="GO:0006412">
    <property type="term" value="P:translation"/>
    <property type="evidence" value="ECO:0007669"/>
    <property type="project" value="UniProtKB-UniRule"/>
</dbReference>
<dbReference type="CDD" id="cd11382">
    <property type="entry name" value="Ribosomal_S8e"/>
    <property type="match status" value="1"/>
</dbReference>
<dbReference type="FunFam" id="2.40.10.310:FF:000002">
    <property type="entry name" value="30S ribosomal protein S8e"/>
    <property type="match status" value="1"/>
</dbReference>
<dbReference type="Gene3D" id="2.40.10.310">
    <property type="match status" value="1"/>
</dbReference>
<dbReference type="HAMAP" id="MF_00029">
    <property type="entry name" value="Ribosomal_eS8"/>
    <property type="match status" value="1"/>
</dbReference>
<dbReference type="InterPro" id="IPR001047">
    <property type="entry name" value="Ribosomal_eS8"/>
</dbReference>
<dbReference type="InterPro" id="IPR018283">
    <property type="entry name" value="Ribosomal_eS8_CS"/>
</dbReference>
<dbReference type="InterPro" id="IPR020919">
    <property type="entry name" value="Ribosomal_protein_eS8_arc"/>
</dbReference>
<dbReference type="InterPro" id="IPR022309">
    <property type="entry name" value="Ribosomal_Se8/biogenesis_NSA2"/>
</dbReference>
<dbReference type="NCBIfam" id="TIGR00307">
    <property type="entry name" value="eS8"/>
    <property type="match status" value="1"/>
</dbReference>
<dbReference type="PANTHER" id="PTHR10394">
    <property type="entry name" value="40S RIBOSOMAL PROTEIN S8"/>
    <property type="match status" value="1"/>
</dbReference>
<dbReference type="Pfam" id="PF01201">
    <property type="entry name" value="Ribosomal_S8e"/>
    <property type="match status" value="1"/>
</dbReference>
<dbReference type="PROSITE" id="PS01193">
    <property type="entry name" value="RIBOSOMAL_S8E"/>
    <property type="match status" value="1"/>
</dbReference>
<evidence type="ECO:0000255" key="1">
    <source>
        <dbReference type="HAMAP-Rule" id="MF_00029"/>
    </source>
</evidence>
<evidence type="ECO:0000256" key="2">
    <source>
        <dbReference type="SAM" id="MobiDB-lite"/>
    </source>
</evidence>
<evidence type="ECO:0000305" key="3"/>
<organism>
    <name type="scientific">Saccharolobus islandicus (strain M.14.25 / Kamchatka #1)</name>
    <name type="common">Sulfolobus islandicus</name>
    <dbReference type="NCBI Taxonomy" id="427317"/>
    <lineage>
        <taxon>Archaea</taxon>
        <taxon>Thermoproteota</taxon>
        <taxon>Thermoprotei</taxon>
        <taxon>Sulfolobales</taxon>
        <taxon>Sulfolobaceae</taxon>
        <taxon>Saccharolobus</taxon>
    </lineage>
</organism>
<comment type="subunit">
    <text evidence="1">Part of the 30S ribosomal subunit.</text>
</comment>
<comment type="similarity">
    <text evidence="1">Belongs to the eukaryotic ribosomal protein eS8 family.</text>
</comment>
<feature type="chain" id="PRO_1000201977" description="Small ribosomal subunit protein eS8">
    <location>
        <begin position="1"/>
        <end position="133"/>
    </location>
</feature>
<feature type="region of interest" description="Disordered" evidence="2">
    <location>
        <begin position="1"/>
        <end position="22"/>
    </location>
</feature>
<gene>
    <name evidence="1" type="primary">rps8e</name>
    <name type="ordered locus">M1425_1976</name>
</gene>